<keyword id="KW-0067">ATP-binding</keyword>
<keyword id="KW-0997">Cell inner membrane</keyword>
<keyword id="KW-1003">Cell membrane</keyword>
<keyword id="KW-0418">Kinase</keyword>
<keyword id="KW-0472">Membrane</keyword>
<keyword id="KW-0547">Nucleotide-binding</keyword>
<keyword id="KW-1185">Reference proteome</keyword>
<keyword id="KW-0808">Transferase</keyword>
<keyword id="KW-0812">Transmembrane</keyword>
<keyword id="KW-1133">Transmembrane helix</keyword>
<keyword id="KW-0831">Ubiquinone biosynthesis</keyword>
<name>UBIB_DELAS</name>
<organism>
    <name type="scientific">Delftia acidovorans (strain DSM 14801 / SPH-1)</name>
    <dbReference type="NCBI Taxonomy" id="398578"/>
    <lineage>
        <taxon>Bacteria</taxon>
        <taxon>Pseudomonadati</taxon>
        <taxon>Pseudomonadota</taxon>
        <taxon>Betaproteobacteria</taxon>
        <taxon>Burkholderiales</taxon>
        <taxon>Comamonadaceae</taxon>
        <taxon>Delftia</taxon>
    </lineage>
</organism>
<dbReference type="EC" id="2.7.-.-" evidence="1"/>
<dbReference type="EMBL" id="CP000884">
    <property type="protein sequence ID" value="ABX38087.1"/>
    <property type="molecule type" value="Genomic_DNA"/>
</dbReference>
<dbReference type="RefSeq" id="WP_012207256.1">
    <property type="nucleotide sequence ID" value="NC_010002.1"/>
</dbReference>
<dbReference type="SMR" id="A9BP42"/>
<dbReference type="STRING" id="398578.Daci_5458"/>
<dbReference type="GeneID" id="24116959"/>
<dbReference type="KEGG" id="dac:Daci_5458"/>
<dbReference type="eggNOG" id="COG0661">
    <property type="taxonomic scope" value="Bacteria"/>
</dbReference>
<dbReference type="HOGENOM" id="CLU_006533_0_0_4"/>
<dbReference type="UniPathway" id="UPA00232"/>
<dbReference type="Proteomes" id="UP000000784">
    <property type="component" value="Chromosome"/>
</dbReference>
<dbReference type="GO" id="GO:0005886">
    <property type="term" value="C:plasma membrane"/>
    <property type="evidence" value="ECO:0007669"/>
    <property type="project" value="UniProtKB-SubCell"/>
</dbReference>
<dbReference type="GO" id="GO:0005524">
    <property type="term" value="F:ATP binding"/>
    <property type="evidence" value="ECO:0007669"/>
    <property type="project" value="UniProtKB-KW"/>
</dbReference>
<dbReference type="GO" id="GO:0004672">
    <property type="term" value="F:protein kinase activity"/>
    <property type="evidence" value="ECO:0007669"/>
    <property type="project" value="UniProtKB-UniRule"/>
</dbReference>
<dbReference type="GO" id="GO:0010795">
    <property type="term" value="P:regulation of ubiquinone biosynthetic process"/>
    <property type="evidence" value="ECO:0007669"/>
    <property type="project" value="UniProtKB-UniRule"/>
</dbReference>
<dbReference type="GO" id="GO:0006744">
    <property type="term" value="P:ubiquinone biosynthetic process"/>
    <property type="evidence" value="ECO:0007669"/>
    <property type="project" value="UniProtKB-UniPathway"/>
</dbReference>
<dbReference type="CDD" id="cd13972">
    <property type="entry name" value="UbiB"/>
    <property type="match status" value="1"/>
</dbReference>
<dbReference type="HAMAP" id="MF_00414">
    <property type="entry name" value="UbiB"/>
    <property type="match status" value="1"/>
</dbReference>
<dbReference type="InterPro" id="IPR004147">
    <property type="entry name" value="ABC1_dom"/>
</dbReference>
<dbReference type="InterPro" id="IPR011009">
    <property type="entry name" value="Kinase-like_dom_sf"/>
</dbReference>
<dbReference type="InterPro" id="IPR010232">
    <property type="entry name" value="UbiB"/>
</dbReference>
<dbReference type="InterPro" id="IPR045308">
    <property type="entry name" value="UbiB_bact"/>
</dbReference>
<dbReference type="InterPro" id="IPR050154">
    <property type="entry name" value="UbiB_kinase"/>
</dbReference>
<dbReference type="NCBIfam" id="NF003404">
    <property type="entry name" value="PRK04750.1"/>
    <property type="match status" value="1"/>
</dbReference>
<dbReference type="NCBIfam" id="TIGR01982">
    <property type="entry name" value="UbiB"/>
    <property type="match status" value="1"/>
</dbReference>
<dbReference type="PANTHER" id="PTHR10566">
    <property type="entry name" value="CHAPERONE-ACTIVITY OF BC1 COMPLEX CABC1 -RELATED"/>
    <property type="match status" value="1"/>
</dbReference>
<dbReference type="PANTHER" id="PTHR10566:SF113">
    <property type="entry name" value="PROTEIN ACTIVITY OF BC1 COMPLEX KINASE 7, CHLOROPLASTIC"/>
    <property type="match status" value="1"/>
</dbReference>
<dbReference type="Pfam" id="PF03109">
    <property type="entry name" value="ABC1"/>
    <property type="match status" value="1"/>
</dbReference>
<dbReference type="SUPFAM" id="SSF56112">
    <property type="entry name" value="Protein kinase-like (PK-like)"/>
    <property type="match status" value="1"/>
</dbReference>
<proteinExistence type="inferred from homology"/>
<accession>A9BP42</accession>
<evidence type="ECO:0000255" key="1">
    <source>
        <dbReference type="HAMAP-Rule" id="MF_00414"/>
    </source>
</evidence>
<sequence length="521" mass="60386">MSRFLRGLTILWVVFRYGLDELVLSSFEHPWMRRARAVLTLGRRLDKPRGQRLREALEELGPIFVKFGQVLSTRSDLMPPDVAEELARLQDRVPPFDSQIAVDTIERAFRKKLDQIFVSFEREPVASASIAQVHFAVISDRNGVQRDVAVKVLRPGMKTVIDKDLALMHMMARWVERLSADGKRLKPRQVVAEFDNYLHDELDLIREASNAAQLRRNMEGLDLVLIPEVYWDFCRSDVMVMQRMTGVPISQVERLREAGVDIPKLARDGVTIFFTQVFRDGFFHADMHPGNIMVSLEPETFGRYISLDFGIVGTLTEYDKEYLAQNFTAFFRRDYKRVAELHIESGWVPPSTRVDELEAAIRAVCEPYFDRPLAEISLGMVLMRLFQTSRRFQVEIQPQLVLLQKTLLNIEGLGRQLDPNLDLWSTAKPFLEKWMLDQMGPQRLWRELLAEAPRYAKLIPELPRLIHRRLTRNSGEHDELLKELLQQQKLTNRLLQAIVSAGIGFVIALILLQLVVRLRWY</sequence>
<protein>
    <recommendedName>
        <fullName evidence="1">Probable protein kinase UbiB</fullName>
        <ecNumber evidence="1">2.7.-.-</ecNumber>
    </recommendedName>
    <alternativeName>
        <fullName evidence="1">Ubiquinone biosynthesis protein UbiB</fullName>
    </alternativeName>
</protein>
<feature type="chain" id="PRO_1000123901" description="Probable protein kinase UbiB">
    <location>
        <begin position="1"/>
        <end position="521"/>
    </location>
</feature>
<feature type="transmembrane region" description="Helical" evidence="1">
    <location>
        <begin position="496"/>
        <end position="516"/>
    </location>
</feature>
<feature type="domain" description="Protein kinase" evidence="1">
    <location>
        <begin position="119"/>
        <end position="497"/>
    </location>
</feature>
<feature type="active site" description="Proton acceptor" evidence="1">
    <location>
        <position position="286"/>
    </location>
</feature>
<feature type="binding site" evidence="1">
    <location>
        <begin position="125"/>
        <end position="133"/>
    </location>
    <ligand>
        <name>ATP</name>
        <dbReference type="ChEBI" id="CHEBI:30616"/>
    </ligand>
</feature>
<feature type="binding site" evidence="1">
    <location>
        <position position="151"/>
    </location>
    <ligand>
        <name>ATP</name>
        <dbReference type="ChEBI" id="CHEBI:30616"/>
    </ligand>
</feature>
<reference key="1">
    <citation type="submission" date="2007-11" db="EMBL/GenBank/DDBJ databases">
        <title>Complete sequence of Delftia acidovorans DSM 14801 / SPH-1.</title>
        <authorList>
            <person name="Copeland A."/>
            <person name="Lucas S."/>
            <person name="Lapidus A."/>
            <person name="Barry K."/>
            <person name="Glavina del Rio T."/>
            <person name="Dalin E."/>
            <person name="Tice H."/>
            <person name="Pitluck S."/>
            <person name="Lowry S."/>
            <person name="Clum A."/>
            <person name="Schmutz J."/>
            <person name="Larimer F."/>
            <person name="Land M."/>
            <person name="Hauser L."/>
            <person name="Kyrpides N."/>
            <person name="Kim E."/>
            <person name="Schleheck D."/>
            <person name="Richardson P."/>
        </authorList>
    </citation>
    <scope>NUCLEOTIDE SEQUENCE [LARGE SCALE GENOMIC DNA]</scope>
    <source>
        <strain>DSM 14801 / SPH-1</strain>
    </source>
</reference>
<gene>
    <name evidence="1" type="primary">ubiB</name>
    <name type="ordered locus">Daci_5458</name>
</gene>
<comment type="function">
    <text evidence="1">Is probably a protein kinase regulator of UbiI activity which is involved in aerobic coenzyme Q (ubiquinone) biosynthesis.</text>
</comment>
<comment type="pathway">
    <text>Cofactor biosynthesis; ubiquinone biosynthesis [regulation].</text>
</comment>
<comment type="subcellular location">
    <subcellularLocation>
        <location evidence="1">Cell inner membrane</location>
        <topology evidence="1">Single-pass membrane protein</topology>
    </subcellularLocation>
</comment>
<comment type="similarity">
    <text evidence="1">Belongs to the ABC1 family. UbiB subfamily.</text>
</comment>